<dbReference type="EC" id="2.1.2.3" evidence="1"/>
<dbReference type="EC" id="3.5.4.10" evidence="1"/>
<dbReference type="EMBL" id="AE003849">
    <property type="protein sequence ID" value="AAF84777.1"/>
    <property type="status" value="ALT_INIT"/>
    <property type="molecule type" value="Genomic_DNA"/>
</dbReference>
<dbReference type="PIR" id="E82616">
    <property type="entry name" value="E82616"/>
</dbReference>
<dbReference type="RefSeq" id="WP_031336542.1">
    <property type="nucleotide sequence ID" value="NC_002488.3"/>
</dbReference>
<dbReference type="SMR" id="Q9PC10"/>
<dbReference type="STRING" id="160492.XF_1975"/>
<dbReference type="KEGG" id="xfa:XF_1975"/>
<dbReference type="PATRIC" id="fig|160492.11.peg.2103"/>
<dbReference type="eggNOG" id="COG0138">
    <property type="taxonomic scope" value="Bacteria"/>
</dbReference>
<dbReference type="HOGENOM" id="CLU_016316_5_2_6"/>
<dbReference type="UniPathway" id="UPA00074">
    <property type="reaction ID" value="UER00133"/>
</dbReference>
<dbReference type="UniPathway" id="UPA00074">
    <property type="reaction ID" value="UER00135"/>
</dbReference>
<dbReference type="Proteomes" id="UP000000812">
    <property type="component" value="Chromosome"/>
</dbReference>
<dbReference type="GO" id="GO:0005829">
    <property type="term" value="C:cytosol"/>
    <property type="evidence" value="ECO:0007669"/>
    <property type="project" value="TreeGrafter"/>
</dbReference>
<dbReference type="GO" id="GO:0003937">
    <property type="term" value="F:IMP cyclohydrolase activity"/>
    <property type="evidence" value="ECO:0007669"/>
    <property type="project" value="UniProtKB-UniRule"/>
</dbReference>
<dbReference type="GO" id="GO:0004643">
    <property type="term" value="F:phosphoribosylaminoimidazolecarboxamide formyltransferase activity"/>
    <property type="evidence" value="ECO:0007669"/>
    <property type="project" value="UniProtKB-UniRule"/>
</dbReference>
<dbReference type="GO" id="GO:0006189">
    <property type="term" value="P:'de novo' IMP biosynthetic process"/>
    <property type="evidence" value="ECO:0007669"/>
    <property type="project" value="UniProtKB-UniRule"/>
</dbReference>
<dbReference type="CDD" id="cd01421">
    <property type="entry name" value="IMPCH"/>
    <property type="match status" value="1"/>
</dbReference>
<dbReference type="FunFam" id="3.40.140.20:FF:000001">
    <property type="entry name" value="Bifunctional purine biosynthesis protein PurH"/>
    <property type="match status" value="1"/>
</dbReference>
<dbReference type="FunFam" id="3.40.140.20:FF:000002">
    <property type="entry name" value="Bifunctional purine biosynthesis protein PurH"/>
    <property type="match status" value="1"/>
</dbReference>
<dbReference type="FunFam" id="3.40.50.1380:FF:000001">
    <property type="entry name" value="Bifunctional purine biosynthesis protein PurH"/>
    <property type="match status" value="1"/>
</dbReference>
<dbReference type="Gene3D" id="3.40.140.20">
    <property type="match status" value="2"/>
</dbReference>
<dbReference type="Gene3D" id="3.40.50.1380">
    <property type="entry name" value="Methylglyoxal synthase-like domain"/>
    <property type="match status" value="1"/>
</dbReference>
<dbReference type="HAMAP" id="MF_00139">
    <property type="entry name" value="PurH"/>
    <property type="match status" value="1"/>
</dbReference>
<dbReference type="InterPro" id="IPR024051">
    <property type="entry name" value="AICAR_Tfase_dup_dom_sf"/>
</dbReference>
<dbReference type="InterPro" id="IPR016193">
    <property type="entry name" value="Cytidine_deaminase-like"/>
</dbReference>
<dbReference type="InterPro" id="IPR011607">
    <property type="entry name" value="MGS-like_dom"/>
</dbReference>
<dbReference type="InterPro" id="IPR036914">
    <property type="entry name" value="MGS-like_dom_sf"/>
</dbReference>
<dbReference type="InterPro" id="IPR002695">
    <property type="entry name" value="PurH-like"/>
</dbReference>
<dbReference type="NCBIfam" id="NF002049">
    <property type="entry name" value="PRK00881.1"/>
    <property type="match status" value="1"/>
</dbReference>
<dbReference type="NCBIfam" id="TIGR00355">
    <property type="entry name" value="purH"/>
    <property type="match status" value="1"/>
</dbReference>
<dbReference type="PANTHER" id="PTHR11692:SF0">
    <property type="entry name" value="BIFUNCTIONAL PURINE BIOSYNTHESIS PROTEIN ATIC"/>
    <property type="match status" value="1"/>
</dbReference>
<dbReference type="PANTHER" id="PTHR11692">
    <property type="entry name" value="BIFUNCTIONAL PURINE BIOSYNTHESIS PROTEIN PURH"/>
    <property type="match status" value="1"/>
</dbReference>
<dbReference type="Pfam" id="PF01808">
    <property type="entry name" value="AICARFT_IMPCHas"/>
    <property type="match status" value="1"/>
</dbReference>
<dbReference type="Pfam" id="PF02142">
    <property type="entry name" value="MGS"/>
    <property type="match status" value="1"/>
</dbReference>
<dbReference type="PIRSF" id="PIRSF000414">
    <property type="entry name" value="AICARFT_IMPCHas"/>
    <property type="match status" value="1"/>
</dbReference>
<dbReference type="SMART" id="SM00798">
    <property type="entry name" value="AICARFT_IMPCHas"/>
    <property type="match status" value="1"/>
</dbReference>
<dbReference type="SMART" id="SM00851">
    <property type="entry name" value="MGS"/>
    <property type="match status" value="1"/>
</dbReference>
<dbReference type="SUPFAM" id="SSF53927">
    <property type="entry name" value="Cytidine deaminase-like"/>
    <property type="match status" value="1"/>
</dbReference>
<dbReference type="SUPFAM" id="SSF52335">
    <property type="entry name" value="Methylglyoxal synthase-like"/>
    <property type="match status" value="1"/>
</dbReference>
<dbReference type="PROSITE" id="PS51855">
    <property type="entry name" value="MGS"/>
    <property type="match status" value="1"/>
</dbReference>
<reference key="1">
    <citation type="journal article" date="2000" name="Nature">
        <title>The genome sequence of the plant pathogen Xylella fastidiosa.</title>
        <authorList>
            <person name="Simpson A.J.G."/>
            <person name="Reinach F.C."/>
            <person name="Arruda P."/>
            <person name="Abreu F.A."/>
            <person name="Acencio M."/>
            <person name="Alvarenga R."/>
            <person name="Alves L.M.C."/>
            <person name="Araya J.E."/>
            <person name="Baia G.S."/>
            <person name="Baptista C.S."/>
            <person name="Barros M.H."/>
            <person name="Bonaccorsi E.D."/>
            <person name="Bordin S."/>
            <person name="Bove J.M."/>
            <person name="Briones M.R.S."/>
            <person name="Bueno M.R.P."/>
            <person name="Camargo A.A."/>
            <person name="Camargo L.E.A."/>
            <person name="Carraro D.M."/>
            <person name="Carrer H."/>
            <person name="Colauto N.B."/>
            <person name="Colombo C."/>
            <person name="Costa F.F."/>
            <person name="Costa M.C.R."/>
            <person name="Costa-Neto C.M."/>
            <person name="Coutinho L.L."/>
            <person name="Cristofani M."/>
            <person name="Dias-Neto E."/>
            <person name="Docena C."/>
            <person name="El-Dorry H."/>
            <person name="Facincani A.P."/>
            <person name="Ferreira A.J.S."/>
            <person name="Ferreira V.C.A."/>
            <person name="Ferro J.A."/>
            <person name="Fraga J.S."/>
            <person name="Franca S.C."/>
            <person name="Franco M.C."/>
            <person name="Frohme M."/>
            <person name="Furlan L.R."/>
            <person name="Garnier M."/>
            <person name="Goldman G.H."/>
            <person name="Goldman M.H.S."/>
            <person name="Gomes S.L."/>
            <person name="Gruber A."/>
            <person name="Ho P.L."/>
            <person name="Hoheisel J.D."/>
            <person name="Junqueira M.L."/>
            <person name="Kemper E.L."/>
            <person name="Kitajima J.P."/>
            <person name="Krieger J.E."/>
            <person name="Kuramae E.E."/>
            <person name="Laigret F."/>
            <person name="Lambais M.R."/>
            <person name="Leite L.C.C."/>
            <person name="Lemos E.G.M."/>
            <person name="Lemos M.V.F."/>
            <person name="Lopes S.A."/>
            <person name="Lopes C.R."/>
            <person name="Machado J.A."/>
            <person name="Machado M.A."/>
            <person name="Madeira A.M.B.N."/>
            <person name="Madeira H.M.F."/>
            <person name="Marino C.L."/>
            <person name="Marques M.V."/>
            <person name="Martins E.A.L."/>
            <person name="Martins E.M.F."/>
            <person name="Matsukuma A.Y."/>
            <person name="Menck C.F.M."/>
            <person name="Miracca E.C."/>
            <person name="Miyaki C.Y."/>
            <person name="Monteiro-Vitorello C.B."/>
            <person name="Moon D.H."/>
            <person name="Nagai M.A."/>
            <person name="Nascimento A.L.T.O."/>
            <person name="Netto L.E.S."/>
            <person name="Nhani A. Jr."/>
            <person name="Nobrega F.G."/>
            <person name="Nunes L.R."/>
            <person name="Oliveira M.A."/>
            <person name="de Oliveira M.C."/>
            <person name="de Oliveira R.C."/>
            <person name="Palmieri D.A."/>
            <person name="Paris A."/>
            <person name="Peixoto B.R."/>
            <person name="Pereira G.A.G."/>
            <person name="Pereira H.A. Jr."/>
            <person name="Pesquero J.B."/>
            <person name="Quaggio R.B."/>
            <person name="Roberto P.G."/>
            <person name="Rodrigues V."/>
            <person name="de Rosa A.J.M."/>
            <person name="de Rosa V.E. Jr."/>
            <person name="de Sa R.G."/>
            <person name="Santelli R.V."/>
            <person name="Sawasaki H.E."/>
            <person name="da Silva A.C.R."/>
            <person name="da Silva A.M."/>
            <person name="da Silva F.R."/>
            <person name="Silva W.A. Jr."/>
            <person name="da Silveira J.F."/>
            <person name="Silvestri M.L.Z."/>
            <person name="Siqueira W.J."/>
            <person name="de Souza A.A."/>
            <person name="de Souza A.P."/>
            <person name="Terenzi M.F."/>
            <person name="Truffi D."/>
            <person name="Tsai S.M."/>
            <person name="Tsuhako M.H."/>
            <person name="Vallada H."/>
            <person name="Van Sluys M.A."/>
            <person name="Verjovski-Almeida S."/>
            <person name="Vettore A.L."/>
            <person name="Zago M.A."/>
            <person name="Zatz M."/>
            <person name="Meidanis J."/>
            <person name="Setubal J.C."/>
        </authorList>
    </citation>
    <scope>NUCLEOTIDE SEQUENCE [LARGE SCALE GENOMIC DNA]</scope>
    <source>
        <strain>9a5c</strain>
    </source>
</reference>
<keyword id="KW-0378">Hydrolase</keyword>
<keyword id="KW-0511">Multifunctional enzyme</keyword>
<keyword id="KW-0658">Purine biosynthesis</keyword>
<keyword id="KW-0808">Transferase</keyword>
<accession>Q9PC10</accession>
<gene>
    <name evidence="1" type="primary">purH</name>
    <name type="ordered locus">XF_1975</name>
</gene>
<sequence length="527" mass="56715">MASDFLPVHRALLSVSDKTGLVELARALLAYNIELLSTGGTATIIREAGLPVQDVADLTGFPEMMDGRVKTLHPMVHGGLLGRAGIDDAVMAKHGIAPIDLLILNLYPFEQITAKKDCTLADAVDTIDIGGPAMLRSAAKNFARVAVATSPDQYPDLLAELQAHHGQLSAEKRFALAVAAFNHVAQYDAAISNYLSSVSDMHTTLPLRHEFPAQLNNTFVKMTELRYGENPHQTGAFYRDVHPQPGTLATFQQLQGKTLSYNNLVDADAAWECVRQFEAPACVIVKHANPCGVAVGKACSDAYEEAYATDPTSAFGGIIAVNRMLDVATMQSILDRQFVEVLIAPDYDADALAYATKKANVRVLRIPSTGVMNRYDFKRIGSGLLVQSTDSLNIHSDALKVVTQLAPTDAQQRDLLFAWHVAKYVKSNAIVYAKDNRTIGIGAGQMSRVYSARIAGIKAADAHLAVTGSVMASDAFFPFRDSIDAAAAAGIKAVIQPGGSMRDNEVIAAADEHGIAMVFTGIRHFRH</sequence>
<protein>
    <recommendedName>
        <fullName evidence="1">Bifunctional purine biosynthesis protein PurH</fullName>
    </recommendedName>
    <domain>
        <recommendedName>
            <fullName evidence="1">Phosphoribosylaminoimidazolecarboxamide formyltransferase</fullName>
            <ecNumber evidence="1">2.1.2.3</ecNumber>
        </recommendedName>
        <alternativeName>
            <fullName evidence="1">AICAR transformylase</fullName>
        </alternativeName>
    </domain>
    <domain>
        <recommendedName>
            <fullName evidence="1">IMP cyclohydrolase</fullName>
            <ecNumber evidence="1">3.5.4.10</ecNumber>
        </recommendedName>
        <alternativeName>
            <fullName evidence="1">ATIC</fullName>
        </alternativeName>
        <alternativeName>
            <fullName evidence="1">IMP synthase</fullName>
        </alternativeName>
        <alternativeName>
            <fullName evidence="1">Inosinicase</fullName>
        </alternativeName>
    </domain>
</protein>
<organism>
    <name type="scientific">Xylella fastidiosa (strain 9a5c)</name>
    <dbReference type="NCBI Taxonomy" id="160492"/>
    <lineage>
        <taxon>Bacteria</taxon>
        <taxon>Pseudomonadati</taxon>
        <taxon>Pseudomonadota</taxon>
        <taxon>Gammaproteobacteria</taxon>
        <taxon>Lysobacterales</taxon>
        <taxon>Lysobacteraceae</taxon>
        <taxon>Xylella</taxon>
    </lineage>
</organism>
<name>PUR9_XYLFA</name>
<proteinExistence type="inferred from homology"/>
<comment type="catalytic activity">
    <reaction evidence="1">
        <text>(6R)-10-formyltetrahydrofolate + 5-amino-1-(5-phospho-beta-D-ribosyl)imidazole-4-carboxamide = 5-formamido-1-(5-phospho-D-ribosyl)imidazole-4-carboxamide + (6S)-5,6,7,8-tetrahydrofolate</text>
        <dbReference type="Rhea" id="RHEA:22192"/>
        <dbReference type="ChEBI" id="CHEBI:57453"/>
        <dbReference type="ChEBI" id="CHEBI:58467"/>
        <dbReference type="ChEBI" id="CHEBI:58475"/>
        <dbReference type="ChEBI" id="CHEBI:195366"/>
        <dbReference type="EC" id="2.1.2.3"/>
    </reaction>
</comment>
<comment type="catalytic activity">
    <reaction evidence="1">
        <text>IMP + H2O = 5-formamido-1-(5-phospho-D-ribosyl)imidazole-4-carboxamide</text>
        <dbReference type="Rhea" id="RHEA:18445"/>
        <dbReference type="ChEBI" id="CHEBI:15377"/>
        <dbReference type="ChEBI" id="CHEBI:58053"/>
        <dbReference type="ChEBI" id="CHEBI:58467"/>
        <dbReference type="EC" id="3.5.4.10"/>
    </reaction>
</comment>
<comment type="pathway">
    <text evidence="1">Purine metabolism; IMP biosynthesis via de novo pathway; 5-formamido-1-(5-phospho-D-ribosyl)imidazole-4-carboxamide from 5-amino-1-(5-phospho-D-ribosyl)imidazole-4-carboxamide (10-formyl THF route): step 1/1.</text>
</comment>
<comment type="pathway">
    <text evidence="1">Purine metabolism; IMP biosynthesis via de novo pathway; IMP from 5-formamido-1-(5-phospho-D-ribosyl)imidazole-4-carboxamide: step 1/1.</text>
</comment>
<comment type="domain">
    <text evidence="1">The IMP cyclohydrolase activity resides in the N-terminal region.</text>
</comment>
<comment type="similarity">
    <text evidence="1">Belongs to the PurH family.</text>
</comment>
<comment type="sequence caution" evidence="3">
    <conflict type="erroneous initiation">
        <sequence resource="EMBL-CDS" id="AAF84777"/>
    </conflict>
</comment>
<feature type="chain" id="PRO_0000192151" description="Bifunctional purine biosynthesis protein PurH">
    <location>
        <begin position="1"/>
        <end position="527"/>
    </location>
</feature>
<feature type="domain" description="MGS-like" evidence="2">
    <location>
        <begin position="1"/>
        <end position="149"/>
    </location>
</feature>
<evidence type="ECO:0000255" key="1">
    <source>
        <dbReference type="HAMAP-Rule" id="MF_00139"/>
    </source>
</evidence>
<evidence type="ECO:0000255" key="2">
    <source>
        <dbReference type="PROSITE-ProRule" id="PRU01202"/>
    </source>
</evidence>
<evidence type="ECO:0000305" key="3"/>